<keyword id="KW-0687">Ribonucleoprotein</keyword>
<keyword id="KW-0689">Ribosomal protein</keyword>
<proteinExistence type="inferred from homology"/>
<sequence length="48" mass="5628">MAVPKRRVSKTRAAKRRTHYKVSLPMPIKDKDGSYKMPHRANPTTKEY</sequence>
<protein>
    <recommendedName>
        <fullName evidence="1">Large ribosomal subunit protein bL32</fullName>
    </recommendedName>
    <alternativeName>
        <fullName evidence="3">50S ribosomal protein L32</fullName>
    </alternativeName>
</protein>
<comment type="similarity">
    <text evidence="1">Belongs to the bacterial ribosomal protein bL32 family.</text>
</comment>
<dbReference type="EMBL" id="CP000814">
    <property type="protein sequence ID" value="ABV51906.1"/>
    <property type="molecule type" value="Genomic_DNA"/>
</dbReference>
<dbReference type="RefSeq" id="WP_002858674.1">
    <property type="nucleotide sequence ID" value="NC_009839.1"/>
</dbReference>
<dbReference type="SMR" id="A8FKB9"/>
<dbReference type="KEGG" id="cju:C8J_0307"/>
<dbReference type="HOGENOM" id="CLU_129084_1_2_7"/>
<dbReference type="GO" id="GO:0015934">
    <property type="term" value="C:large ribosomal subunit"/>
    <property type="evidence" value="ECO:0007669"/>
    <property type="project" value="InterPro"/>
</dbReference>
<dbReference type="GO" id="GO:0003735">
    <property type="term" value="F:structural constituent of ribosome"/>
    <property type="evidence" value="ECO:0007669"/>
    <property type="project" value="InterPro"/>
</dbReference>
<dbReference type="GO" id="GO:0006412">
    <property type="term" value="P:translation"/>
    <property type="evidence" value="ECO:0007669"/>
    <property type="project" value="UniProtKB-UniRule"/>
</dbReference>
<dbReference type="HAMAP" id="MF_00340">
    <property type="entry name" value="Ribosomal_bL32"/>
    <property type="match status" value="1"/>
</dbReference>
<dbReference type="InterPro" id="IPR002677">
    <property type="entry name" value="Ribosomal_bL32"/>
</dbReference>
<dbReference type="InterPro" id="IPR011332">
    <property type="entry name" value="Ribosomal_zn-bd"/>
</dbReference>
<dbReference type="NCBIfam" id="TIGR01031">
    <property type="entry name" value="rpmF_bact"/>
    <property type="match status" value="1"/>
</dbReference>
<dbReference type="Pfam" id="PF01783">
    <property type="entry name" value="Ribosomal_L32p"/>
    <property type="match status" value="1"/>
</dbReference>
<dbReference type="SUPFAM" id="SSF57829">
    <property type="entry name" value="Zn-binding ribosomal proteins"/>
    <property type="match status" value="1"/>
</dbReference>
<accession>A8FKB9</accession>
<name>RL32_CAMJ8</name>
<organism>
    <name type="scientific">Campylobacter jejuni subsp. jejuni serotype O:6 (strain 81116 / NCTC 11828)</name>
    <dbReference type="NCBI Taxonomy" id="407148"/>
    <lineage>
        <taxon>Bacteria</taxon>
        <taxon>Pseudomonadati</taxon>
        <taxon>Campylobacterota</taxon>
        <taxon>Epsilonproteobacteria</taxon>
        <taxon>Campylobacterales</taxon>
        <taxon>Campylobacteraceae</taxon>
        <taxon>Campylobacter</taxon>
    </lineage>
</organism>
<reference key="1">
    <citation type="journal article" date="2007" name="J. Bacteriol.">
        <title>The complete genome sequence of Campylobacter jejuni strain 81116 (NCTC11828).</title>
        <authorList>
            <person name="Pearson B.M."/>
            <person name="Gaskin D.J.H."/>
            <person name="Segers R.P.A.M."/>
            <person name="Wells J.M."/>
            <person name="Nuijten P.J.M."/>
            <person name="van Vliet A.H.M."/>
        </authorList>
    </citation>
    <scope>NUCLEOTIDE SEQUENCE [LARGE SCALE GENOMIC DNA]</scope>
    <source>
        <strain>81116 / NCTC 11828</strain>
    </source>
</reference>
<evidence type="ECO:0000255" key="1">
    <source>
        <dbReference type="HAMAP-Rule" id="MF_00340"/>
    </source>
</evidence>
<evidence type="ECO:0000256" key="2">
    <source>
        <dbReference type="SAM" id="MobiDB-lite"/>
    </source>
</evidence>
<evidence type="ECO:0000305" key="3"/>
<gene>
    <name evidence="1" type="primary">rpmF</name>
    <name type="ordered locus">C8J_0307</name>
</gene>
<feature type="chain" id="PRO_1000072061" description="Large ribosomal subunit protein bL32">
    <location>
        <begin position="1"/>
        <end position="48"/>
    </location>
</feature>
<feature type="region of interest" description="Disordered" evidence="2">
    <location>
        <begin position="1"/>
        <end position="48"/>
    </location>
</feature>
<feature type="compositionally biased region" description="Basic residues" evidence="2">
    <location>
        <begin position="1"/>
        <end position="20"/>
    </location>
</feature>